<dbReference type="EC" id="2.7.7.38" evidence="1"/>
<dbReference type="EMBL" id="CP000946">
    <property type="protein sequence ID" value="ACA78307.1"/>
    <property type="molecule type" value="Genomic_DNA"/>
</dbReference>
<dbReference type="RefSeq" id="WP_000011603.1">
    <property type="nucleotide sequence ID" value="NZ_MTFT01000009.1"/>
</dbReference>
<dbReference type="SMR" id="B1IW13"/>
<dbReference type="KEGG" id="ecl:EcolC_2678"/>
<dbReference type="HOGENOM" id="CLU_065038_1_0_6"/>
<dbReference type="UniPathway" id="UPA00030"/>
<dbReference type="UniPathway" id="UPA00358">
    <property type="reaction ID" value="UER00476"/>
</dbReference>
<dbReference type="GO" id="GO:0005829">
    <property type="term" value="C:cytosol"/>
    <property type="evidence" value="ECO:0007669"/>
    <property type="project" value="TreeGrafter"/>
</dbReference>
<dbReference type="GO" id="GO:0008690">
    <property type="term" value="F:3-deoxy-manno-octulosonate cytidylyltransferase activity"/>
    <property type="evidence" value="ECO:0007669"/>
    <property type="project" value="UniProtKB-UniRule"/>
</dbReference>
<dbReference type="GO" id="GO:0033468">
    <property type="term" value="P:CMP-keto-3-deoxy-D-manno-octulosonic acid biosynthetic process"/>
    <property type="evidence" value="ECO:0007669"/>
    <property type="project" value="UniProtKB-UniRule"/>
</dbReference>
<dbReference type="GO" id="GO:0009103">
    <property type="term" value="P:lipopolysaccharide biosynthetic process"/>
    <property type="evidence" value="ECO:0007669"/>
    <property type="project" value="UniProtKB-UniRule"/>
</dbReference>
<dbReference type="CDD" id="cd02517">
    <property type="entry name" value="CMP-KDO-Synthetase"/>
    <property type="match status" value="1"/>
</dbReference>
<dbReference type="FunFam" id="3.90.550.10:FF:000011">
    <property type="entry name" value="3-deoxy-manno-octulosonate cytidylyltransferase"/>
    <property type="match status" value="1"/>
</dbReference>
<dbReference type="Gene3D" id="3.90.550.10">
    <property type="entry name" value="Spore Coat Polysaccharide Biosynthesis Protein SpsA, Chain A"/>
    <property type="match status" value="1"/>
</dbReference>
<dbReference type="HAMAP" id="MF_00057">
    <property type="entry name" value="KdsB"/>
    <property type="match status" value="1"/>
</dbReference>
<dbReference type="InterPro" id="IPR003329">
    <property type="entry name" value="Cytidylyl_trans"/>
</dbReference>
<dbReference type="InterPro" id="IPR004528">
    <property type="entry name" value="KdsB"/>
</dbReference>
<dbReference type="InterPro" id="IPR029044">
    <property type="entry name" value="Nucleotide-diphossugar_trans"/>
</dbReference>
<dbReference type="NCBIfam" id="TIGR00466">
    <property type="entry name" value="kdsB"/>
    <property type="match status" value="1"/>
</dbReference>
<dbReference type="NCBIfam" id="NF003950">
    <property type="entry name" value="PRK05450.1-3"/>
    <property type="match status" value="1"/>
</dbReference>
<dbReference type="NCBIfam" id="NF003952">
    <property type="entry name" value="PRK05450.1-5"/>
    <property type="match status" value="1"/>
</dbReference>
<dbReference type="NCBIfam" id="NF009905">
    <property type="entry name" value="PRK13368.1"/>
    <property type="match status" value="1"/>
</dbReference>
<dbReference type="PANTHER" id="PTHR42866">
    <property type="entry name" value="3-DEOXY-MANNO-OCTULOSONATE CYTIDYLYLTRANSFERASE"/>
    <property type="match status" value="1"/>
</dbReference>
<dbReference type="PANTHER" id="PTHR42866:SF2">
    <property type="entry name" value="3-DEOXY-MANNO-OCTULOSONATE CYTIDYLYLTRANSFERASE, MITOCHONDRIAL"/>
    <property type="match status" value="1"/>
</dbReference>
<dbReference type="Pfam" id="PF02348">
    <property type="entry name" value="CTP_transf_3"/>
    <property type="match status" value="1"/>
</dbReference>
<dbReference type="SUPFAM" id="SSF53448">
    <property type="entry name" value="Nucleotide-diphospho-sugar transferases"/>
    <property type="match status" value="1"/>
</dbReference>
<evidence type="ECO:0000255" key="1">
    <source>
        <dbReference type="HAMAP-Rule" id="MF_00057"/>
    </source>
</evidence>
<reference key="1">
    <citation type="submission" date="2008-02" db="EMBL/GenBank/DDBJ databases">
        <title>Complete sequence of Escherichia coli C str. ATCC 8739.</title>
        <authorList>
            <person name="Copeland A."/>
            <person name="Lucas S."/>
            <person name="Lapidus A."/>
            <person name="Glavina del Rio T."/>
            <person name="Dalin E."/>
            <person name="Tice H."/>
            <person name="Bruce D."/>
            <person name="Goodwin L."/>
            <person name="Pitluck S."/>
            <person name="Kiss H."/>
            <person name="Brettin T."/>
            <person name="Detter J.C."/>
            <person name="Han C."/>
            <person name="Kuske C.R."/>
            <person name="Schmutz J."/>
            <person name="Larimer F."/>
            <person name="Land M."/>
            <person name="Hauser L."/>
            <person name="Kyrpides N."/>
            <person name="Mikhailova N."/>
            <person name="Ingram L."/>
            <person name="Richardson P."/>
        </authorList>
    </citation>
    <scope>NUCLEOTIDE SEQUENCE [LARGE SCALE GENOMIC DNA]</scope>
    <source>
        <strain>ATCC 8739 / DSM 1576 / NBRC 3972 / NCIMB 8545 / WDCM 00012 / Crooks</strain>
    </source>
</reference>
<name>KDSB_ECOLC</name>
<feature type="chain" id="PRO_1000074994" description="3-deoxy-manno-octulosonate cytidylyltransferase">
    <location>
        <begin position="1"/>
        <end position="248"/>
    </location>
</feature>
<gene>
    <name evidence="1" type="primary">kdsB</name>
    <name type="ordered locus">EcolC_2678</name>
</gene>
<accession>B1IW13</accession>
<protein>
    <recommendedName>
        <fullName evidence="1">3-deoxy-manno-octulosonate cytidylyltransferase</fullName>
        <ecNumber evidence="1">2.7.7.38</ecNumber>
    </recommendedName>
    <alternativeName>
        <fullName evidence="1">CMP-2-keto-3-deoxyoctulosonic acid synthase</fullName>
        <shortName evidence="1">CKS</shortName>
        <shortName evidence="1">CMP-KDO synthase</shortName>
    </alternativeName>
</protein>
<proteinExistence type="inferred from homology"/>
<sequence>MSFVVIIPARYASTRLPGKPLVDINGKPMIVHVLERARESGAERIIVATDHEDVARAVEAAGGEVCMTRADHQSGTERLAEVVEKCAFSDDTVIVNVQGDEPMIPATIIRQVADNLAQRQVGMATLAVPIHNAEEAFNPNAVKVVLDAEGYALYFSRATIPWDRDRFAEGLETVGDNFLRHLGIYGYRAGFIRRYVNWQPSPLEHIEMLEQLRVLWYGEKIHVAVAQEVPGTGVDTPEDLERVRAEMR</sequence>
<keyword id="KW-0963">Cytoplasm</keyword>
<keyword id="KW-0448">Lipopolysaccharide biosynthesis</keyword>
<keyword id="KW-0548">Nucleotidyltransferase</keyword>
<keyword id="KW-0808">Transferase</keyword>
<organism>
    <name type="scientific">Escherichia coli (strain ATCC 8739 / DSM 1576 / NBRC 3972 / NCIMB 8545 / WDCM 00012 / Crooks)</name>
    <dbReference type="NCBI Taxonomy" id="481805"/>
    <lineage>
        <taxon>Bacteria</taxon>
        <taxon>Pseudomonadati</taxon>
        <taxon>Pseudomonadota</taxon>
        <taxon>Gammaproteobacteria</taxon>
        <taxon>Enterobacterales</taxon>
        <taxon>Enterobacteriaceae</taxon>
        <taxon>Escherichia</taxon>
    </lineage>
</organism>
<comment type="function">
    <text evidence="1">Activates KDO (a required 8-carbon sugar) for incorporation into bacterial lipopolysaccharide in Gram-negative bacteria.</text>
</comment>
<comment type="catalytic activity">
    <reaction evidence="1">
        <text>3-deoxy-alpha-D-manno-oct-2-ulosonate + CTP = CMP-3-deoxy-beta-D-manno-octulosonate + diphosphate</text>
        <dbReference type="Rhea" id="RHEA:23448"/>
        <dbReference type="ChEBI" id="CHEBI:33019"/>
        <dbReference type="ChEBI" id="CHEBI:37563"/>
        <dbReference type="ChEBI" id="CHEBI:85986"/>
        <dbReference type="ChEBI" id="CHEBI:85987"/>
        <dbReference type="EC" id="2.7.7.38"/>
    </reaction>
</comment>
<comment type="pathway">
    <text evidence="1">Nucleotide-sugar biosynthesis; CMP-3-deoxy-D-manno-octulosonate biosynthesis; CMP-3-deoxy-D-manno-octulosonate from 3-deoxy-D-manno-octulosonate and CTP: step 1/1.</text>
</comment>
<comment type="pathway">
    <text evidence="1">Bacterial outer membrane biogenesis; lipopolysaccharide biosynthesis.</text>
</comment>
<comment type="subcellular location">
    <subcellularLocation>
        <location evidence="1">Cytoplasm</location>
    </subcellularLocation>
</comment>
<comment type="similarity">
    <text evidence="1">Belongs to the KdsB family.</text>
</comment>